<keyword id="KW-0067">ATP-binding</keyword>
<keyword id="KW-0418">Kinase</keyword>
<keyword id="KW-0547">Nucleotide-binding</keyword>
<keyword id="KW-1185">Reference proteome</keyword>
<keyword id="KW-0677">Repeat</keyword>
<keyword id="KW-0808">Transferase</keyword>
<evidence type="ECO:0000250" key="1"/>
<evidence type="ECO:0000255" key="2">
    <source>
        <dbReference type="PROSITE-ProRule" id="PRU00781"/>
    </source>
</evidence>
<evidence type="ECO:0000256" key="3">
    <source>
        <dbReference type="SAM" id="MobiDB-lite"/>
    </source>
</evidence>
<sequence>MSVAHADDADDYSRPTGESYHAEKALPSGDFYTGQWRDNLPHGHGKYLWTDGCMYVGDWHRGKTMGKGRFSWPSGATYEGDFKNGYMDGKGTYIDSSGDLYRGSWVMNLRHGQGTKSYVNGDCYDGEWRRGLQDGHGRYQWKNENHYIGQWKNGLMNGNGTMIWSNGNRYDGSWEDGAPKGNGTFRWSDGSFYVGVWSKDPKEQNGTYYPSTSSGNFDWQPQQVFYVDLSECVVCTCQRIPVLPSQKMPVWYGASEQSSSGNRTKNSERPRRRSVDGRVSNGEMELRSNGSGYLQVDDNAESTRSSLGPLRIQPAKKQGQTISKGHKNYELMLNLQLGIRHSVGRPAPATSLDLKASAFDPKEKLWTKFPSEGSKYTPPHQSCEFKWKDYCPVVFRTLRKLFSVDAADYMLSICGNDALRELSSPGKSGSFFYLTNDDRYMIKTMKKAETKVLIRMLPAYYNHVRACENTLVTKFFGLHCVKLTGTAQKKVRFVIMGNLFCTGHSIHRRFDLKGSSHGRLTTKPESEIDPNTTLKDLDLNFAFRLQKNWFQEFCRQVDRDCEFLEQERIMDYSLLVGLHFREAAIKDSATPTSGARTPTGNSETRLSRAEMDRFLLDASKLASIKLGINMPARVERTARRSDCENQLVGDPTGEFYDVIVYFGIIDILQDYDISKKLEHAYKSMQYDPTSISAVDPKQYSRRFRDFIFRVFVEDA</sequence>
<feature type="chain" id="PRO_0000185478" description="Phosphatidylinositol 4-phosphate 5-kinase 6">
    <location>
        <begin position="1"/>
        <end position="715"/>
    </location>
</feature>
<feature type="repeat" description="MORN 1">
    <location>
        <begin position="32"/>
        <end position="54"/>
    </location>
</feature>
<feature type="repeat" description="MORN 2">
    <location>
        <begin position="55"/>
        <end position="77"/>
    </location>
</feature>
<feature type="repeat" description="MORN 3">
    <location>
        <begin position="78"/>
        <end position="100"/>
    </location>
</feature>
<feature type="repeat" description="MORN 4">
    <location>
        <begin position="101"/>
        <end position="123"/>
    </location>
</feature>
<feature type="repeat" description="MORN 5">
    <location>
        <begin position="124"/>
        <end position="146"/>
    </location>
</feature>
<feature type="repeat" description="MORN 6">
    <location>
        <begin position="147"/>
        <end position="169"/>
    </location>
</feature>
<feature type="repeat" description="MORN 7">
    <location>
        <begin position="170"/>
        <end position="192"/>
    </location>
</feature>
<feature type="repeat" description="MORN 8">
    <location>
        <begin position="193"/>
        <end position="214"/>
    </location>
</feature>
<feature type="domain" description="PIPK" evidence="2">
    <location>
        <begin position="321"/>
        <end position="711"/>
    </location>
</feature>
<feature type="region of interest" description="Disordered" evidence="3">
    <location>
        <begin position="1"/>
        <end position="21"/>
    </location>
</feature>
<feature type="region of interest" description="Disordered" evidence="3">
    <location>
        <begin position="253"/>
        <end position="306"/>
    </location>
</feature>
<feature type="region of interest" description="Activation loop" evidence="1">
    <location>
        <begin position="671"/>
        <end position="692"/>
    </location>
</feature>
<feature type="compositionally biased region" description="Basic and acidic residues" evidence="3">
    <location>
        <begin position="1"/>
        <end position="13"/>
    </location>
</feature>
<feature type="compositionally biased region" description="Polar residues" evidence="3">
    <location>
        <begin position="255"/>
        <end position="264"/>
    </location>
</feature>
<feature type="compositionally biased region" description="Basic and acidic residues" evidence="3">
    <location>
        <begin position="265"/>
        <end position="276"/>
    </location>
</feature>
<comment type="catalytic activity">
    <reaction>
        <text>a 1,2-diacyl-sn-glycero-3-phospho-(1D-myo-inositol 4-phosphate) + ATP = a 1,2-diacyl-sn-glycero-3-phospho-(1D-myo-inositol-4,5-bisphosphate) + ADP + H(+)</text>
        <dbReference type="Rhea" id="RHEA:14425"/>
        <dbReference type="ChEBI" id="CHEBI:15378"/>
        <dbReference type="ChEBI" id="CHEBI:30616"/>
        <dbReference type="ChEBI" id="CHEBI:58178"/>
        <dbReference type="ChEBI" id="CHEBI:58456"/>
        <dbReference type="ChEBI" id="CHEBI:456216"/>
        <dbReference type="EC" id="2.7.1.68"/>
    </reaction>
</comment>
<reference key="1">
    <citation type="journal article" date="2000" name="Nature">
        <title>Sequence and analysis of chromosome 3 of the plant Arabidopsis thaliana.</title>
        <authorList>
            <person name="Salanoubat M."/>
            <person name="Lemcke K."/>
            <person name="Rieger M."/>
            <person name="Ansorge W."/>
            <person name="Unseld M."/>
            <person name="Fartmann B."/>
            <person name="Valle G."/>
            <person name="Bloecker H."/>
            <person name="Perez-Alonso M."/>
            <person name="Obermaier B."/>
            <person name="Delseny M."/>
            <person name="Boutry M."/>
            <person name="Grivell L.A."/>
            <person name="Mache R."/>
            <person name="Puigdomenech P."/>
            <person name="De Simone V."/>
            <person name="Choisne N."/>
            <person name="Artiguenave F."/>
            <person name="Robert C."/>
            <person name="Brottier P."/>
            <person name="Wincker P."/>
            <person name="Cattolico L."/>
            <person name="Weissenbach J."/>
            <person name="Saurin W."/>
            <person name="Quetier F."/>
            <person name="Schaefer M."/>
            <person name="Mueller-Auer S."/>
            <person name="Gabel C."/>
            <person name="Fuchs M."/>
            <person name="Benes V."/>
            <person name="Wurmbach E."/>
            <person name="Drzonek H."/>
            <person name="Erfle H."/>
            <person name="Jordan N."/>
            <person name="Bangert S."/>
            <person name="Wiedelmann R."/>
            <person name="Kranz H."/>
            <person name="Voss H."/>
            <person name="Holland R."/>
            <person name="Brandt P."/>
            <person name="Nyakatura G."/>
            <person name="Vezzi A."/>
            <person name="D'Angelo M."/>
            <person name="Pallavicini A."/>
            <person name="Toppo S."/>
            <person name="Simionati B."/>
            <person name="Conrad A."/>
            <person name="Hornischer K."/>
            <person name="Kauer G."/>
            <person name="Loehnert T.-H."/>
            <person name="Nordsiek G."/>
            <person name="Reichelt J."/>
            <person name="Scharfe M."/>
            <person name="Schoen O."/>
            <person name="Bargues M."/>
            <person name="Terol J."/>
            <person name="Climent J."/>
            <person name="Navarro P."/>
            <person name="Collado C."/>
            <person name="Perez-Perez A."/>
            <person name="Ottenwaelder B."/>
            <person name="Duchemin D."/>
            <person name="Cooke R."/>
            <person name="Laudie M."/>
            <person name="Berger-Llauro C."/>
            <person name="Purnelle B."/>
            <person name="Masuy D."/>
            <person name="de Haan M."/>
            <person name="Maarse A.C."/>
            <person name="Alcaraz J.-P."/>
            <person name="Cottet A."/>
            <person name="Casacuberta E."/>
            <person name="Monfort A."/>
            <person name="Argiriou A."/>
            <person name="Flores M."/>
            <person name="Liguori R."/>
            <person name="Vitale D."/>
            <person name="Mannhaupt G."/>
            <person name="Haase D."/>
            <person name="Schoof H."/>
            <person name="Rudd S."/>
            <person name="Zaccaria P."/>
            <person name="Mewes H.-W."/>
            <person name="Mayer K.F.X."/>
            <person name="Kaul S."/>
            <person name="Town C.D."/>
            <person name="Koo H.L."/>
            <person name="Tallon L.J."/>
            <person name="Jenkins J."/>
            <person name="Rooney T."/>
            <person name="Rizzo M."/>
            <person name="Walts A."/>
            <person name="Utterback T."/>
            <person name="Fujii C.Y."/>
            <person name="Shea T.P."/>
            <person name="Creasy T.H."/>
            <person name="Haas B."/>
            <person name="Maiti R."/>
            <person name="Wu D."/>
            <person name="Peterson J."/>
            <person name="Van Aken S."/>
            <person name="Pai G."/>
            <person name="Militscher J."/>
            <person name="Sellers P."/>
            <person name="Gill J.E."/>
            <person name="Feldblyum T.V."/>
            <person name="Preuss D."/>
            <person name="Lin X."/>
            <person name="Nierman W.C."/>
            <person name="Salzberg S.L."/>
            <person name="White O."/>
            <person name="Venter J.C."/>
            <person name="Fraser C.M."/>
            <person name="Kaneko T."/>
            <person name="Nakamura Y."/>
            <person name="Sato S."/>
            <person name="Kato T."/>
            <person name="Asamizu E."/>
            <person name="Sasamoto S."/>
            <person name="Kimura T."/>
            <person name="Idesawa K."/>
            <person name="Kawashima K."/>
            <person name="Kishida Y."/>
            <person name="Kiyokawa C."/>
            <person name="Kohara M."/>
            <person name="Matsumoto M."/>
            <person name="Matsuno A."/>
            <person name="Muraki A."/>
            <person name="Nakayama S."/>
            <person name="Nakazaki N."/>
            <person name="Shinpo S."/>
            <person name="Takeuchi C."/>
            <person name="Wada T."/>
            <person name="Watanabe A."/>
            <person name="Yamada M."/>
            <person name="Yasuda M."/>
            <person name="Tabata S."/>
        </authorList>
    </citation>
    <scope>NUCLEOTIDE SEQUENCE [LARGE SCALE GENOMIC DNA]</scope>
    <source>
        <strain>cv. Columbia</strain>
    </source>
</reference>
<reference key="2">
    <citation type="journal article" date="2017" name="Plant J.">
        <title>Araport11: a complete reannotation of the Arabidopsis thaliana reference genome.</title>
        <authorList>
            <person name="Cheng C.Y."/>
            <person name="Krishnakumar V."/>
            <person name="Chan A.P."/>
            <person name="Thibaud-Nissen F."/>
            <person name="Schobel S."/>
            <person name="Town C.D."/>
        </authorList>
    </citation>
    <scope>GENOME REANNOTATION</scope>
    <source>
        <strain>cv. Columbia</strain>
    </source>
</reference>
<reference key="3">
    <citation type="journal article" date="2003" name="Science">
        <title>Empirical analysis of transcriptional activity in the Arabidopsis genome.</title>
        <authorList>
            <person name="Yamada K."/>
            <person name="Lim J."/>
            <person name="Dale J.M."/>
            <person name="Chen H."/>
            <person name="Shinn P."/>
            <person name="Palm C.J."/>
            <person name="Southwick A.M."/>
            <person name="Wu H.C."/>
            <person name="Kim C.J."/>
            <person name="Nguyen M."/>
            <person name="Pham P.K."/>
            <person name="Cheuk R.F."/>
            <person name="Karlin-Newmann G."/>
            <person name="Liu S.X."/>
            <person name="Lam B."/>
            <person name="Sakano H."/>
            <person name="Wu T."/>
            <person name="Yu G."/>
            <person name="Miranda M."/>
            <person name="Quach H.L."/>
            <person name="Tripp M."/>
            <person name="Chang C.H."/>
            <person name="Lee J.M."/>
            <person name="Toriumi M.J."/>
            <person name="Chan M.M."/>
            <person name="Tang C.C."/>
            <person name="Onodera C.S."/>
            <person name="Deng J.M."/>
            <person name="Akiyama K."/>
            <person name="Ansari Y."/>
            <person name="Arakawa T."/>
            <person name="Banh J."/>
            <person name="Banno F."/>
            <person name="Bowser L."/>
            <person name="Brooks S.Y."/>
            <person name="Carninci P."/>
            <person name="Chao Q."/>
            <person name="Choy N."/>
            <person name="Enju A."/>
            <person name="Goldsmith A.D."/>
            <person name="Gurjal M."/>
            <person name="Hansen N.F."/>
            <person name="Hayashizaki Y."/>
            <person name="Johnson-Hopson C."/>
            <person name="Hsuan V.W."/>
            <person name="Iida K."/>
            <person name="Karnes M."/>
            <person name="Khan S."/>
            <person name="Koesema E."/>
            <person name="Ishida J."/>
            <person name="Jiang P.X."/>
            <person name="Jones T."/>
            <person name="Kawai J."/>
            <person name="Kamiya A."/>
            <person name="Meyers C."/>
            <person name="Nakajima M."/>
            <person name="Narusaka M."/>
            <person name="Seki M."/>
            <person name="Sakurai T."/>
            <person name="Satou M."/>
            <person name="Tamse R."/>
            <person name="Vaysberg M."/>
            <person name="Wallender E.K."/>
            <person name="Wong C."/>
            <person name="Yamamura Y."/>
            <person name="Yuan S."/>
            <person name="Shinozaki K."/>
            <person name="Davis R.W."/>
            <person name="Theologis A."/>
            <person name="Ecker J.R."/>
        </authorList>
    </citation>
    <scope>NUCLEOTIDE SEQUENCE [LARGE SCALE MRNA]</scope>
    <source>
        <strain>cv. Columbia</strain>
    </source>
</reference>
<reference key="4">
    <citation type="journal article" date="2002" name="Plant Physiol.">
        <title>Inositol phospholipid metabolism in Arabidopsis. Characterized and putative isoforms of inositol phospholipid kinase and phosphoinositide-specific phospholipase C.</title>
        <authorList>
            <person name="Mueller-Roeber B."/>
            <person name="Pical C."/>
        </authorList>
    </citation>
    <scope>GENE FAMILY</scope>
    <scope>NOMENCLATURE</scope>
</reference>
<dbReference type="EC" id="2.7.1.68"/>
<dbReference type="EMBL" id="AC013483">
    <property type="protein sequence ID" value="AAF21206.1"/>
    <property type="molecule type" value="Genomic_DNA"/>
</dbReference>
<dbReference type="EMBL" id="CP002686">
    <property type="protein sequence ID" value="AEE74625.1"/>
    <property type="molecule type" value="Genomic_DNA"/>
</dbReference>
<dbReference type="EMBL" id="BT008595">
    <property type="protein sequence ID" value="AAP40421.1"/>
    <property type="molecule type" value="mRNA"/>
</dbReference>
<dbReference type="RefSeq" id="NP_187453.1">
    <property type="nucleotide sequence ID" value="NM_111675.6"/>
</dbReference>
<dbReference type="SMR" id="Q9SFB8"/>
<dbReference type="BioGRID" id="5322">
    <property type="interactions" value="1"/>
</dbReference>
<dbReference type="FunCoup" id="Q9SFB8">
    <property type="interactions" value="2616"/>
</dbReference>
<dbReference type="STRING" id="3702.Q9SFB8"/>
<dbReference type="iPTMnet" id="Q9SFB8"/>
<dbReference type="PaxDb" id="3702-AT3G07960.1"/>
<dbReference type="ProteomicsDB" id="234955"/>
<dbReference type="EnsemblPlants" id="AT3G07960.1">
    <property type="protein sequence ID" value="AT3G07960.1"/>
    <property type="gene ID" value="AT3G07960"/>
</dbReference>
<dbReference type="GeneID" id="819987"/>
<dbReference type="Gramene" id="AT3G07960.1">
    <property type="protein sequence ID" value="AT3G07960.1"/>
    <property type="gene ID" value="AT3G07960"/>
</dbReference>
<dbReference type="KEGG" id="ath:AT3G07960"/>
<dbReference type="Araport" id="AT3G07960"/>
<dbReference type="TAIR" id="AT3G07960">
    <property type="gene designation" value="PIP5K6"/>
</dbReference>
<dbReference type="eggNOG" id="KOG0229">
    <property type="taxonomic scope" value="Eukaryota"/>
</dbReference>
<dbReference type="HOGENOM" id="CLU_004312_6_4_1"/>
<dbReference type="InParanoid" id="Q9SFB8"/>
<dbReference type="OrthoDB" id="70770at2759"/>
<dbReference type="PhylomeDB" id="Q9SFB8"/>
<dbReference type="BioCyc" id="ARA:AT3G07960-MONOMER"/>
<dbReference type="PRO" id="PR:Q9SFB8"/>
<dbReference type="Proteomes" id="UP000006548">
    <property type="component" value="Chromosome 3"/>
</dbReference>
<dbReference type="ExpressionAtlas" id="Q9SFB8">
    <property type="expression patterns" value="baseline and differential"/>
</dbReference>
<dbReference type="GO" id="GO:0016324">
    <property type="term" value="C:apical plasma membrane"/>
    <property type="evidence" value="ECO:0000314"/>
    <property type="project" value="TAIR"/>
</dbReference>
<dbReference type="GO" id="GO:0090406">
    <property type="term" value="C:pollen tube"/>
    <property type="evidence" value="ECO:0000314"/>
    <property type="project" value="TAIR"/>
</dbReference>
<dbReference type="GO" id="GO:0016308">
    <property type="term" value="F:1-phosphatidylinositol-4-phosphate 5-kinase activity"/>
    <property type="evidence" value="ECO:0000314"/>
    <property type="project" value="TAIR"/>
</dbReference>
<dbReference type="GO" id="GO:0005524">
    <property type="term" value="F:ATP binding"/>
    <property type="evidence" value="ECO:0007669"/>
    <property type="project" value="UniProtKB-KW"/>
</dbReference>
<dbReference type="GO" id="GO:0072583">
    <property type="term" value="P:clathrin-dependent endocytosis"/>
    <property type="evidence" value="ECO:0000315"/>
    <property type="project" value="TAIR"/>
</dbReference>
<dbReference type="GO" id="GO:0046488">
    <property type="term" value="P:phosphatidylinositol metabolic process"/>
    <property type="evidence" value="ECO:0007669"/>
    <property type="project" value="InterPro"/>
</dbReference>
<dbReference type="CDD" id="cd17302">
    <property type="entry name" value="PIPKc_AtPIP5K_like"/>
    <property type="match status" value="1"/>
</dbReference>
<dbReference type="FunFam" id="2.20.110.10:FF:000015">
    <property type="entry name" value="Phosphatidylinositol 4-phosphate 5-kinase"/>
    <property type="match status" value="1"/>
</dbReference>
<dbReference type="FunFam" id="2.20.110.10:FF:000027">
    <property type="entry name" value="Phosphatidylinositol 4-phosphate 5-kinase"/>
    <property type="match status" value="1"/>
</dbReference>
<dbReference type="FunFam" id="3.30.800.10:FF:000003">
    <property type="entry name" value="Phosphatidylinositol 4-phosphate 5-kinase"/>
    <property type="match status" value="1"/>
</dbReference>
<dbReference type="Gene3D" id="3.30.810.10">
    <property type="entry name" value="2-Layer Sandwich"/>
    <property type="match status" value="1"/>
</dbReference>
<dbReference type="Gene3D" id="2.20.110.10">
    <property type="entry name" value="Histone H3 K4-specific methyltransferase SET7/9 N-terminal domain"/>
    <property type="match status" value="3"/>
</dbReference>
<dbReference type="Gene3D" id="3.30.800.10">
    <property type="entry name" value="Phosphatidylinositol Phosphate Kinase II Beta"/>
    <property type="match status" value="1"/>
</dbReference>
<dbReference type="InterPro" id="IPR003409">
    <property type="entry name" value="MORN"/>
</dbReference>
<dbReference type="InterPro" id="IPR017163">
    <property type="entry name" value="PIno-4-P-5_kinase_pln"/>
</dbReference>
<dbReference type="InterPro" id="IPR027483">
    <property type="entry name" value="PInositol-4-P-4/5-kinase_C_sf"/>
</dbReference>
<dbReference type="InterPro" id="IPR002498">
    <property type="entry name" value="PInositol-4-P-4/5-kinase_core"/>
</dbReference>
<dbReference type="InterPro" id="IPR027484">
    <property type="entry name" value="PInositol-4-P-5-kinase_N"/>
</dbReference>
<dbReference type="InterPro" id="IPR023610">
    <property type="entry name" value="PInositol-4/5-P-5/4-kinase"/>
</dbReference>
<dbReference type="PANTHER" id="PTHR23086:SF113">
    <property type="entry name" value="PHOSPHATIDYLINOSITOL 4-PHOSPHATE 5-KINASE 6"/>
    <property type="match status" value="1"/>
</dbReference>
<dbReference type="PANTHER" id="PTHR23086">
    <property type="entry name" value="PHOSPHATIDYLINOSITOL-4-PHOSPHATE 5-KINASE"/>
    <property type="match status" value="1"/>
</dbReference>
<dbReference type="Pfam" id="PF02493">
    <property type="entry name" value="MORN"/>
    <property type="match status" value="7"/>
</dbReference>
<dbReference type="Pfam" id="PF01504">
    <property type="entry name" value="PIP5K"/>
    <property type="match status" value="1"/>
</dbReference>
<dbReference type="PIRSF" id="PIRSF037274">
    <property type="entry name" value="PIP5K_plant_prd"/>
    <property type="match status" value="1"/>
</dbReference>
<dbReference type="SMART" id="SM00698">
    <property type="entry name" value="MORN"/>
    <property type="match status" value="7"/>
</dbReference>
<dbReference type="SMART" id="SM00330">
    <property type="entry name" value="PIPKc"/>
    <property type="match status" value="1"/>
</dbReference>
<dbReference type="SUPFAM" id="SSF82185">
    <property type="entry name" value="Histone H3 K4-specific methyltransferase SET7/9 N-terminal domain"/>
    <property type="match status" value="2"/>
</dbReference>
<dbReference type="SUPFAM" id="SSF56104">
    <property type="entry name" value="SAICAR synthase-like"/>
    <property type="match status" value="1"/>
</dbReference>
<dbReference type="PROSITE" id="PS51455">
    <property type="entry name" value="PIPK"/>
    <property type="match status" value="1"/>
</dbReference>
<accession>Q9SFB8</accession>
<protein>
    <recommendedName>
        <fullName>Phosphatidylinositol 4-phosphate 5-kinase 6</fullName>
        <shortName>AtPIP5K6</shortName>
        <ecNumber>2.7.1.68</ecNumber>
    </recommendedName>
    <alternativeName>
        <fullName>1-phosphatidylinositol 4-phosphate kinase 6</fullName>
    </alternativeName>
    <alternativeName>
        <fullName>Diphosphoinositide kinase 6</fullName>
    </alternativeName>
    <alternativeName>
        <fullName>PtdIns(4)P-5-kinase 6</fullName>
    </alternativeName>
</protein>
<gene>
    <name type="primary">PIP5K6</name>
    <name type="ordered locus">At3g07960</name>
    <name type="ORF">F17A17.30</name>
</gene>
<proteinExistence type="evidence at transcript level"/>
<name>PI5K6_ARATH</name>
<organism>
    <name type="scientific">Arabidopsis thaliana</name>
    <name type="common">Mouse-ear cress</name>
    <dbReference type="NCBI Taxonomy" id="3702"/>
    <lineage>
        <taxon>Eukaryota</taxon>
        <taxon>Viridiplantae</taxon>
        <taxon>Streptophyta</taxon>
        <taxon>Embryophyta</taxon>
        <taxon>Tracheophyta</taxon>
        <taxon>Spermatophyta</taxon>
        <taxon>Magnoliopsida</taxon>
        <taxon>eudicotyledons</taxon>
        <taxon>Gunneridae</taxon>
        <taxon>Pentapetalae</taxon>
        <taxon>rosids</taxon>
        <taxon>malvids</taxon>
        <taxon>Brassicales</taxon>
        <taxon>Brassicaceae</taxon>
        <taxon>Camelineae</taxon>
        <taxon>Arabidopsis</taxon>
    </lineage>
</organism>